<evidence type="ECO:0000250" key="1">
    <source>
        <dbReference type="UniProtKB" id="O08908"/>
    </source>
</evidence>
<evidence type="ECO:0000255" key="2">
    <source>
        <dbReference type="PROSITE-ProRule" id="PRU00172"/>
    </source>
</evidence>
<evidence type="ECO:0000255" key="3">
    <source>
        <dbReference type="PROSITE-ProRule" id="PRU00191"/>
    </source>
</evidence>
<evidence type="ECO:0000255" key="4">
    <source>
        <dbReference type="PROSITE-ProRule" id="PRU00192"/>
    </source>
</evidence>
<evidence type="ECO:0000256" key="5">
    <source>
        <dbReference type="SAM" id="MobiDB-lite"/>
    </source>
</evidence>
<evidence type="ECO:0000269" key="6">
    <source>
    </source>
</evidence>
<evidence type="ECO:0000269" key="7">
    <source>
    </source>
</evidence>
<evidence type="ECO:0000269" key="8">
    <source>
    </source>
</evidence>
<evidence type="ECO:0000269" key="9">
    <source>
    </source>
</evidence>
<evidence type="ECO:0000269" key="10">
    <source>
    </source>
</evidence>
<evidence type="ECO:0000269" key="11">
    <source>
    </source>
</evidence>
<evidence type="ECO:0000269" key="12">
    <source>
    </source>
</evidence>
<evidence type="ECO:0000269" key="13">
    <source>
    </source>
</evidence>
<evidence type="ECO:0000269" key="14">
    <source>
    </source>
</evidence>
<evidence type="ECO:0000269" key="15">
    <source>
    </source>
</evidence>
<evidence type="ECO:0000269" key="16">
    <source>
    </source>
</evidence>
<evidence type="ECO:0000269" key="17">
    <source>
    </source>
</evidence>
<evidence type="ECO:0000269" key="18">
    <source>
    </source>
</evidence>
<evidence type="ECO:0000303" key="19">
    <source>
    </source>
</evidence>
<evidence type="ECO:0000305" key="20"/>
<evidence type="ECO:0007744" key="21">
    <source>
    </source>
</evidence>
<evidence type="ECO:0007744" key="22">
    <source>
    </source>
</evidence>
<evidence type="ECO:0007744" key="23">
    <source>
    </source>
</evidence>
<evidence type="ECO:0007829" key="24">
    <source>
        <dbReference type="PDB" id="2XS6"/>
    </source>
</evidence>
<evidence type="ECO:0007829" key="25">
    <source>
        <dbReference type="PDB" id="3O5Z"/>
    </source>
</evidence>
<evidence type="ECO:0007829" key="26">
    <source>
        <dbReference type="PDB" id="6OX7"/>
    </source>
</evidence>
<evidence type="ECO:0007829" key="27">
    <source>
        <dbReference type="PDB" id="7RCH"/>
    </source>
</evidence>
<evidence type="ECO:0007829" key="28">
    <source>
        <dbReference type="PDB" id="7RNU"/>
    </source>
</evidence>
<keyword id="KW-0002">3D-structure</keyword>
<keyword id="KW-0225">Disease variant</keyword>
<keyword id="KW-0343">GTPase activation</keyword>
<keyword id="KW-0597">Phosphoprotein</keyword>
<keyword id="KW-0653">Protein transport</keyword>
<keyword id="KW-1267">Proteomics identification</keyword>
<keyword id="KW-1185">Reference proteome</keyword>
<keyword id="KW-0677">Repeat</keyword>
<keyword id="KW-0727">SH2 domain</keyword>
<keyword id="KW-0728">SH3 domain</keyword>
<keyword id="KW-0346">Stress response</keyword>
<keyword id="KW-0813">Transport</keyword>
<keyword id="KW-0832">Ubl conjugation</keyword>
<dbReference type="EMBL" id="X80907">
    <property type="protein sequence ID" value="CAA56868.1"/>
    <property type="molecule type" value="mRNA"/>
</dbReference>
<dbReference type="EMBL" id="AC007192">
    <property type="protein sequence ID" value="AAD22671.1"/>
    <property type="molecule type" value="Genomic_DNA"/>
</dbReference>
<dbReference type="EMBL" id="BC070082">
    <property type="protein sequence ID" value="AAH70082.1"/>
    <property type="molecule type" value="mRNA"/>
</dbReference>
<dbReference type="EMBL" id="BC090249">
    <property type="protein sequence ID" value="AAH90249.1"/>
    <property type="molecule type" value="mRNA"/>
</dbReference>
<dbReference type="CCDS" id="CCDS12371.1"/>
<dbReference type="PIR" id="H59435">
    <property type="entry name" value="H59435"/>
</dbReference>
<dbReference type="RefSeq" id="NP_005018.2">
    <property type="nucleotide sequence ID" value="NM_005027.4"/>
</dbReference>
<dbReference type="PDB" id="2KT1">
    <property type="method" value="NMR"/>
    <property type="chains" value="A=1-80"/>
</dbReference>
<dbReference type="PDB" id="2XS6">
    <property type="method" value="X-ray"/>
    <property type="resolution" value="2.09 A"/>
    <property type="chains" value="A=108-298"/>
</dbReference>
<dbReference type="PDB" id="3MTT">
    <property type="method" value="X-ray"/>
    <property type="resolution" value="3.30 A"/>
    <property type="chains" value="A=433-610"/>
</dbReference>
<dbReference type="PDB" id="3O5Z">
    <property type="method" value="X-ray"/>
    <property type="resolution" value="2.01 A"/>
    <property type="chains" value="A/B=1-85"/>
</dbReference>
<dbReference type="PDB" id="6OX7">
    <property type="method" value="X-ray"/>
    <property type="resolution" value="2.75 A"/>
    <property type="chains" value="C/D=435-597"/>
</dbReference>
<dbReference type="PDB" id="6U28">
    <property type="method" value="X-ray"/>
    <property type="resolution" value="2.95 A"/>
    <property type="chains" value="C/D=435-597"/>
</dbReference>
<dbReference type="PDB" id="7RCH">
    <property type="method" value="X-ray"/>
    <property type="resolution" value="3.10 A"/>
    <property type="chains" value="C/D=435-597"/>
</dbReference>
<dbReference type="PDB" id="7RNU">
    <property type="method" value="X-ray"/>
    <property type="resolution" value="1.45 A"/>
    <property type="chains" value="A/C/E/G=318-428"/>
</dbReference>
<dbReference type="PDBsum" id="2KT1"/>
<dbReference type="PDBsum" id="2XS6"/>
<dbReference type="PDBsum" id="3MTT"/>
<dbReference type="PDBsum" id="3O5Z"/>
<dbReference type="PDBsum" id="6OX7"/>
<dbReference type="PDBsum" id="6U28"/>
<dbReference type="PDBsum" id="7RCH"/>
<dbReference type="PDBsum" id="7RNU"/>
<dbReference type="BMRB" id="O00459"/>
<dbReference type="SMR" id="O00459"/>
<dbReference type="BioGRID" id="111314">
    <property type="interactions" value="228"/>
</dbReference>
<dbReference type="ComplexPortal" id="CPX-1917">
    <property type="entry name" value="Phosphatidylinositol 3-kinase complex class IA, p110alpha/p85beta"/>
</dbReference>
<dbReference type="ComplexPortal" id="CPX-5976">
    <property type="entry name" value="Phosphatidylinositol 3-kinase complex class IA, p110beta/p85beta"/>
</dbReference>
<dbReference type="ComplexPortal" id="CPX-5980">
    <property type="entry name" value="Phosphatidylinositol 3-kinase complex class IA, p110delta/p85beta"/>
</dbReference>
<dbReference type="CORUM" id="O00459"/>
<dbReference type="DIP" id="DIP-31811N"/>
<dbReference type="FunCoup" id="O00459">
    <property type="interactions" value="3483"/>
</dbReference>
<dbReference type="IntAct" id="O00459">
    <property type="interactions" value="148"/>
</dbReference>
<dbReference type="MINT" id="O00459"/>
<dbReference type="STRING" id="9606.ENSP00000222254"/>
<dbReference type="BindingDB" id="O00459"/>
<dbReference type="ChEMBL" id="CHEMBL4437"/>
<dbReference type="DrugBank" id="DB05210">
    <property type="generic name" value="SF1126"/>
</dbReference>
<dbReference type="iPTMnet" id="O00459"/>
<dbReference type="PhosphoSitePlus" id="O00459"/>
<dbReference type="BioMuta" id="PIK3R2"/>
<dbReference type="CPTAC" id="CPTAC-1538"/>
<dbReference type="CPTAC" id="CPTAC-2801"/>
<dbReference type="CPTAC" id="CPTAC-2802"/>
<dbReference type="jPOST" id="O00459"/>
<dbReference type="MassIVE" id="O00459"/>
<dbReference type="PaxDb" id="9606-ENSP00000222254"/>
<dbReference type="PeptideAtlas" id="O00459"/>
<dbReference type="ProteomicsDB" id="47910"/>
<dbReference type="Pumba" id="O00459"/>
<dbReference type="ABCD" id="O00459">
    <property type="antibodies" value="6 sequenced antibodies"/>
</dbReference>
<dbReference type="Antibodypedia" id="14986">
    <property type="antibodies" value="640 antibodies from 41 providers"/>
</dbReference>
<dbReference type="DNASU" id="5296"/>
<dbReference type="Ensembl" id="ENST00000222254.13">
    <property type="protein sequence ID" value="ENSP00000222254.6"/>
    <property type="gene ID" value="ENSG00000105647.20"/>
</dbReference>
<dbReference type="GeneID" id="5296"/>
<dbReference type="KEGG" id="hsa:5296"/>
<dbReference type="MANE-Select" id="ENST00000222254.13">
    <property type="protein sequence ID" value="ENSP00000222254.6"/>
    <property type="RefSeq nucleotide sequence ID" value="NM_005027.4"/>
    <property type="RefSeq protein sequence ID" value="NP_005018.2"/>
</dbReference>
<dbReference type="UCSC" id="uc002nia.3">
    <property type="organism name" value="human"/>
</dbReference>
<dbReference type="AGR" id="HGNC:8980"/>
<dbReference type="CTD" id="5296"/>
<dbReference type="DisGeNET" id="5296"/>
<dbReference type="GeneCards" id="PIK3R2"/>
<dbReference type="GeneReviews" id="PIK3R2"/>
<dbReference type="HGNC" id="HGNC:8980">
    <property type="gene designation" value="PIK3R2"/>
</dbReference>
<dbReference type="HPA" id="ENSG00000105647">
    <property type="expression patterns" value="Low tissue specificity"/>
</dbReference>
<dbReference type="MalaCards" id="PIK3R2"/>
<dbReference type="MIM" id="603157">
    <property type="type" value="gene"/>
</dbReference>
<dbReference type="MIM" id="603387">
    <property type="type" value="phenotype"/>
</dbReference>
<dbReference type="neXtProt" id="NX_O00459"/>
<dbReference type="OpenTargets" id="ENSG00000105647"/>
<dbReference type="OpenTargets" id="ENSG00000268173"/>
<dbReference type="Orphanet" id="83473">
    <property type="disease" value="Megalencephaly-polymicrogyria-postaxial polydactyly-hydrocephalus syndrome"/>
</dbReference>
<dbReference type="PharmGKB" id="PA33313"/>
<dbReference type="VEuPathDB" id="HostDB:ENSG00000105647"/>
<dbReference type="eggNOG" id="KOG4637">
    <property type="taxonomic scope" value="Eukaryota"/>
</dbReference>
<dbReference type="GeneTree" id="ENSGT00940000157050"/>
<dbReference type="HOGENOM" id="CLU_007031_1_0_1"/>
<dbReference type="InParanoid" id="O00459"/>
<dbReference type="OMA" id="SERCPQN"/>
<dbReference type="OrthoDB" id="3175255at2759"/>
<dbReference type="PAN-GO" id="O00459">
    <property type="GO annotations" value="5 GO annotations based on evolutionary models"/>
</dbReference>
<dbReference type="PhylomeDB" id="O00459"/>
<dbReference type="TreeFam" id="TF102033"/>
<dbReference type="BioCyc" id="MetaCyc:ENSG00000105647-MONOMER"/>
<dbReference type="BRENDA" id="2.7.1.137">
    <property type="organism ID" value="2681"/>
</dbReference>
<dbReference type="PathwayCommons" id="O00459"/>
<dbReference type="Reactome" id="R-HSA-109704">
    <property type="pathway name" value="PI3K Cascade"/>
</dbReference>
<dbReference type="Reactome" id="R-HSA-112399">
    <property type="pathway name" value="IRS-mediated signalling"/>
</dbReference>
<dbReference type="Reactome" id="R-HSA-114604">
    <property type="pathway name" value="GPVI-mediated activation cascade"/>
</dbReference>
<dbReference type="Reactome" id="R-HSA-1257604">
    <property type="pathway name" value="PIP3 activates AKT signaling"/>
</dbReference>
<dbReference type="Reactome" id="R-HSA-1266695">
    <property type="pathway name" value="Interleukin-7 signaling"/>
</dbReference>
<dbReference type="Reactome" id="R-HSA-1433557">
    <property type="pathway name" value="Signaling by SCF-KIT"/>
</dbReference>
<dbReference type="Reactome" id="R-HSA-1660499">
    <property type="pathway name" value="Synthesis of PIPs at the plasma membrane"/>
</dbReference>
<dbReference type="Reactome" id="R-HSA-186763">
    <property type="pathway name" value="Downstream signal transduction"/>
</dbReference>
<dbReference type="Reactome" id="R-HSA-198203">
    <property type="pathway name" value="PI3K/AKT activation"/>
</dbReference>
<dbReference type="Reactome" id="R-HSA-201556">
    <property type="pathway name" value="Signaling by ALK"/>
</dbReference>
<dbReference type="Reactome" id="R-HSA-202424">
    <property type="pathway name" value="Downstream TCR signaling"/>
</dbReference>
<dbReference type="Reactome" id="R-HSA-2029485">
    <property type="pathway name" value="Role of phospholipids in phagocytosis"/>
</dbReference>
<dbReference type="Reactome" id="R-HSA-210993">
    <property type="pathway name" value="Tie2 Signaling"/>
</dbReference>
<dbReference type="Reactome" id="R-HSA-2219530">
    <property type="pathway name" value="Constitutive Signaling by Aberrant PI3K in Cancer"/>
</dbReference>
<dbReference type="Reactome" id="R-HSA-2424491">
    <property type="pathway name" value="DAP12 signaling"/>
</dbReference>
<dbReference type="Reactome" id="R-HSA-2730905">
    <property type="pathway name" value="Role of LAT2/NTAL/LAB on calcium mobilization"/>
</dbReference>
<dbReference type="Reactome" id="R-HSA-373753">
    <property type="pathway name" value="Nephrin family interactions"/>
</dbReference>
<dbReference type="Reactome" id="R-HSA-389357">
    <property type="pathway name" value="CD28 dependent PI3K/Akt signaling"/>
</dbReference>
<dbReference type="Reactome" id="R-HSA-416476">
    <property type="pathway name" value="G alpha (q) signalling events"/>
</dbReference>
<dbReference type="Reactome" id="R-HSA-4420097">
    <property type="pathway name" value="VEGFA-VEGFR2 Pathway"/>
</dbReference>
<dbReference type="Reactome" id="R-HSA-512988">
    <property type="pathway name" value="Interleukin-3, Interleukin-5 and GM-CSF signaling"/>
</dbReference>
<dbReference type="Reactome" id="R-HSA-5673001">
    <property type="pathway name" value="RAF/MAP kinase cascade"/>
</dbReference>
<dbReference type="Reactome" id="R-HSA-6811558">
    <property type="pathway name" value="PI5P, PP2A and IER3 Regulate PI3K/AKT Signaling"/>
</dbReference>
<dbReference type="Reactome" id="R-HSA-8853659">
    <property type="pathway name" value="RET signaling"/>
</dbReference>
<dbReference type="Reactome" id="R-HSA-8980692">
    <property type="pathway name" value="RHOA GTPase cycle"/>
</dbReference>
<dbReference type="Reactome" id="R-HSA-9009391">
    <property type="pathway name" value="Extra-nuclear estrogen signaling"/>
</dbReference>
<dbReference type="Reactome" id="R-HSA-9013026">
    <property type="pathway name" value="RHOB GTPase cycle"/>
</dbReference>
<dbReference type="Reactome" id="R-HSA-9013148">
    <property type="pathway name" value="CDC42 GTPase cycle"/>
</dbReference>
<dbReference type="Reactome" id="R-HSA-9013149">
    <property type="pathway name" value="RAC1 GTPase cycle"/>
</dbReference>
<dbReference type="Reactome" id="R-HSA-9013404">
    <property type="pathway name" value="RAC2 GTPase cycle"/>
</dbReference>
<dbReference type="Reactome" id="R-HSA-9013405">
    <property type="pathway name" value="RHOD GTPase cycle"/>
</dbReference>
<dbReference type="Reactome" id="R-HSA-9013409">
    <property type="pathway name" value="RHOJ GTPase cycle"/>
</dbReference>
<dbReference type="Reactome" id="R-HSA-9013420">
    <property type="pathway name" value="RHOU GTPase cycle"/>
</dbReference>
<dbReference type="Reactome" id="R-HSA-9013423">
    <property type="pathway name" value="RAC3 GTPase cycle"/>
</dbReference>
<dbReference type="Reactome" id="R-HSA-9035034">
    <property type="pathway name" value="RHOF GTPase cycle"/>
</dbReference>
<dbReference type="Reactome" id="R-HSA-912526">
    <property type="pathway name" value="Interleukin receptor SHC signaling"/>
</dbReference>
<dbReference type="Reactome" id="R-HSA-912631">
    <property type="pathway name" value="Regulation of signaling by CBL"/>
</dbReference>
<dbReference type="Reactome" id="R-HSA-9670439">
    <property type="pathway name" value="Signaling by phosphorylated juxtamembrane, extracellular and kinase domain KIT mutants"/>
</dbReference>
<dbReference type="Reactome" id="R-HSA-9673767">
    <property type="pathway name" value="Signaling by PDGFRA transmembrane, juxtamembrane and kinase domain mutants"/>
</dbReference>
<dbReference type="Reactome" id="R-HSA-9673770">
    <property type="pathway name" value="Signaling by PDGFRA extracellular domain mutants"/>
</dbReference>
<dbReference type="Reactome" id="R-HSA-9696264">
    <property type="pathway name" value="RND3 GTPase cycle"/>
</dbReference>
<dbReference type="Reactome" id="R-HSA-9696270">
    <property type="pathway name" value="RND2 GTPase cycle"/>
</dbReference>
<dbReference type="Reactome" id="R-HSA-9696273">
    <property type="pathway name" value="RND1 GTPase cycle"/>
</dbReference>
<dbReference type="Reactome" id="R-HSA-9725370">
    <property type="pathway name" value="Signaling by ALK fusions and activated point mutants"/>
</dbReference>
<dbReference type="Reactome" id="R-HSA-9842640">
    <property type="pathway name" value="Signaling by LTK in cancer"/>
</dbReference>
<dbReference type="Reactome" id="R-HSA-9842663">
    <property type="pathway name" value="Signaling by LTK"/>
</dbReference>
<dbReference type="Reactome" id="R-HSA-9856530">
    <property type="pathway name" value="High laminar flow shear stress activates signaling by PIEZO1 and PECAM1:CDH5:KDR in endothelial cells"/>
</dbReference>
<dbReference type="Reactome" id="R-HSA-9927354">
    <property type="pathway name" value="Co-stimulation by ICOS"/>
</dbReference>
<dbReference type="SignaLink" id="O00459"/>
<dbReference type="SIGNOR" id="O00459"/>
<dbReference type="BioGRID-ORCS" id="5296">
    <property type="hits" value="62 hits in 1165 CRISPR screens"/>
</dbReference>
<dbReference type="CD-CODE" id="8C2F96ED">
    <property type="entry name" value="Centrosome"/>
</dbReference>
<dbReference type="ChiTaRS" id="PIK3R2">
    <property type="organism name" value="human"/>
</dbReference>
<dbReference type="EvolutionaryTrace" id="O00459"/>
<dbReference type="GeneWiki" id="PIK3R2"/>
<dbReference type="GenomeRNAi" id="5296"/>
<dbReference type="Pharos" id="O00459">
    <property type="development level" value="Tbio"/>
</dbReference>
<dbReference type="PRO" id="PR:O00459"/>
<dbReference type="Proteomes" id="UP000005640">
    <property type="component" value="Chromosome 19"/>
</dbReference>
<dbReference type="RNAct" id="O00459">
    <property type="molecule type" value="protein"/>
</dbReference>
<dbReference type="Bgee" id="ENSG00000105647">
    <property type="expression patterns" value="Expressed in cortical plate and 100 other cell types or tissues"/>
</dbReference>
<dbReference type="ExpressionAtlas" id="O00459">
    <property type="expression patterns" value="baseline and differential"/>
</dbReference>
<dbReference type="GO" id="GO:0005829">
    <property type="term" value="C:cytosol"/>
    <property type="evidence" value="ECO:0000304"/>
    <property type="project" value="Reactome"/>
</dbReference>
<dbReference type="GO" id="GO:0005925">
    <property type="term" value="C:focal adhesion"/>
    <property type="evidence" value="ECO:0007669"/>
    <property type="project" value="Ensembl"/>
</dbReference>
<dbReference type="GO" id="GO:0005634">
    <property type="term" value="C:nucleus"/>
    <property type="evidence" value="ECO:0000250"/>
    <property type="project" value="UniProtKB"/>
</dbReference>
<dbReference type="GO" id="GO:0005943">
    <property type="term" value="C:phosphatidylinositol 3-kinase complex, class IA"/>
    <property type="evidence" value="ECO:0000353"/>
    <property type="project" value="ComplexPortal"/>
</dbReference>
<dbReference type="GO" id="GO:0046935">
    <property type="term" value="F:1-phosphatidylinositol-3-kinase regulator activity"/>
    <property type="evidence" value="ECO:0000318"/>
    <property type="project" value="GO_Central"/>
</dbReference>
<dbReference type="GO" id="GO:0036312">
    <property type="term" value="F:phosphatidylinositol 3-kinase regulatory subunit binding"/>
    <property type="evidence" value="ECO:0007669"/>
    <property type="project" value="Ensembl"/>
</dbReference>
<dbReference type="GO" id="GO:0001784">
    <property type="term" value="F:phosphotyrosine residue binding"/>
    <property type="evidence" value="ECO:0000353"/>
    <property type="project" value="CAFA"/>
</dbReference>
<dbReference type="GO" id="GO:0046982">
    <property type="term" value="F:protein heterodimerization activity"/>
    <property type="evidence" value="ECO:0000250"/>
    <property type="project" value="ParkinsonsUK-UCL"/>
</dbReference>
<dbReference type="GO" id="GO:0019903">
    <property type="term" value="F:protein phosphatase binding"/>
    <property type="evidence" value="ECO:0000353"/>
    <property type="project" value="UniProtKB"/>
</dbReference>
<dbReference type="GO" id="GO:0030971">
    <property type="term" value="F:receptor tyrosine kinase binding"/>
    <property type="evidence" value="ECO:0000353"/>
    <property type="project" value="UniProtKB"/>
</dbReference>
<dbReference type="GO" id="GO:0030183">
    <property type="term" value="P:B cell differentiation"/>
    <property type="evidence" value="ECO:0000303"/>
    <property type="project" value="ComplexPortal"/>
</dbReference>
<dbReference type="GO" id="GO:0032869">
    <property type="term" value="P:cellular response to insulin stimulus"/>
    <property type="evidence" value="ECO:0000250"/>
    <property type="project" value="UniProtKB"/>
</dbReference>
<dbReference type="GO" id="GO:0006955">
    <property type="term" value="P:immune response"/>
    <property type="evidence" value="ECO:0000303"/>
    <property type="project" value="ComplexPortal"/>
</dbReference>
<dbReference type="GO" id="GO:0008286">
    <property type="term" value="P:insulin receptor signaling pathway"/>
    <property type="evidence" value="ECO:0000318"/>
    <property type="project" value="GO_Central"/>
</dbReference>
<dbReference type="GO" id="GO:0001678">
    <property type="term" value="P:intracellular glucose homeostasis"/>
    <property type="evidence" value="ECO:0000250"/>
    <property type="project" value="UniProtKB"/>
</dbReference>
<dbReference type="GO" id="GO:0043409">
    <property type="term" value="P:negative regulation of MAPK cascade"/>
    <property type="evidence" value="ECO:0000315"/>
    <property type="project" value="BHF-UCL"/>
</dbReference>
<dbReference type="GO" id="GO:0043491">
    <property type="term" value="P:phosphatidylinositol 3-kinase/protein kinase B signal transduction"/>
    <property type="evidence" value="ECO:0000314"/>
    <property type="project" value="UniProtKB"/>
</dbReference>
<dbReference type="GO" id="GO:0045785">
    <property type="term" value="P:positive regulation of cell adhesion"/>
    <property type="evidence" value="ECO:0007669"/>
    <property type="project" value="Ensembl"/>
</dbReference>
<dbReference type="GO" id="GO:0042307">
    <property type="term" value="P:positive regulation of protein import into nucleus"/>
    <property type="evidence" value="ECO:0000250"/>
    <property type="project" value="UniProtKB"/>
</dbReference>
<dbReference type="GO" id="GO:0045944">
    <property type="term" value="P:positive regulation of transcription by RNA polymerase II"/>
    <property type="evidence" value="ECO:0000250"/>
    <property type="project" value="UniProtKB"/>
</dbReference>
<dbReference type="GO" id="GO:0015031">
    <property type="term" value="P:protein transport"/>
    <property type="evidence" value="ECO:0007669"/>
    <property type="project" value="UniProtKB-KW"/>
</dbReference>
<dbReference type="GO" id="GO:0030833">
    <property type="term" value="P:regulation of actin filament polymerization"/>
    <property type="evidence" value="ECO:0007669"/>
    <property type="project" value="Ensembl"/>
</dbReference>
<dbReference type="GO" id="GO:0010506">
    <property type="term" value="P:regulation of autophagy"/>
    <property type="evidence" value="ECO:0000315"/>
    <property type="project" value="UniProtKB"/>
</dbReference>
<dbReference type="GO" id="GO:1903076">
    <property type="term" value="P:regulation of protein localization to plasma membrane"/>
    <property type="evidence" value="ECO:0007669"/>
    <property type="project" value="Ensembl"/>
</dbReference>
<dbReference type="GO" id="GO:0051492">
    <property type="term" value="P:regulation of stress fiber assembly"/>
    <property type="evidence" value="ECO:0007669"/>
    <property type="project" value="Ensembl"/>
</dbReference>
<dbReference type="GO" id="GO:0034976">
    <property type="term" value="P:response to endoplasmic reticulum stress"/>
    <property type="evidence" value="ECO:0000250"/>
    <property type="project" value="UniProtKB"/>
</dbReference>
<dbReference type="GO" id="GO:0030217">
    <property type="term" value="P:T cell differentiation"/>
    <property type="evidence" value="ECO:0000303"/>
    <property type="project" value="ComplexPortal"/>
</dbReference>
<dbReference type="CDD" id="cd12926">
    <property type="entry name" value="iSH2_PIK3R2"/>
    <property type="match status" value="1"/>
</dbReference>
<dbReference type="CDD" id="cd09930">
    <property type="entry name" value="SH2_cSH2_p85_like"/>
    <property type="match status" value="1"/>
</dbReference>
<dbReference type="CDD" id="cd09942">
    <property type="entry name" value="SH2_nSH2_p85_like"/>
    <property type="match status" value="1"/>
</dbReference>
<dbReference type="CDD" id="cd11909">
    <property type="entry name" value="SH3_PI3K_p85beta"/>
    <property type="match status" value="1"/>
</dbReference>
<dbReference type="FunFam" id="3.30.505.10:FF:000006">
    <property type="entry name" value="Phosphatidylinositol 3-kinase regulatory subunit alpha"/>
    <property type="match status" value="1"/>
</dbReference>
<dbReference type="FunFam" id="3.30.505.10:FF:000014">
    <property type="entry name" value="Phosphatidylinositol 3-kinase regulatory subunit alpha"/>
    <property type="match status" value="1"/>
</dbReference>
<dbReference type="FunFam" id="2.30.30.40:FF:000075">
    <property type="entry name" value="phosphatidylinositol 3-kinase regulatory subunit alpha"/>
    <property type="match status" value="1"/>
</dbReference>
<dbReference type="FunFam" id="1.10.555.10:FF:000037">
    <property type="entry name" value="Phosphatidylinositol 3-kinase regulatory subunit beta"/>
    <property type="match status" value="1"/>
</dbReference>
<dbReference type="FunFam" id="1.10.287.1490:FF:000001">
    <property type="entry name" value="Putative phosphatidylinositol 3-kinase regulatory subunit alpha"/>
    <property type="match status" value="1"/>
</dbReference>
<dbReference type="Gene3D" id="1.10.287.1490">
    <property type="match status" value="1"/>
</dbReference>
<dbReference type="Gene3D" id="1.10.555.10">
    <property type="entry name" value="Rho GTPase activation protein"/>
    <property type="match status" value="1"/>
</dbReference>
<dbReference type="Gene3D" id="3.30.505.10">
    <property type="entry name" value="SH2 domain"/>
    <property type="match status" value="2"/>
</dbReference>
<dbReference type="Gene3D" id="2.30.30.40">
    <property type="entry name" value="SH3 Domains"/>
    <property type="match status" value="1"/>
</dbReference>
<dbReference type="InterPro" id="IPR032498">
    <property type="entry name" value="PI3K_P85_iSH2"/>
</dbReference>
<dbReference type="InterPro" id="IPR035586">
    <property type="entry name" value="PI3K_p85beta_SH3"/>
</dbReference>
<dbReference type="InterPro" id="IPR035020">
    <property type="entry name" value="PI3kinase_P85_cSH2"/>
</dbReference>
<dbReference type="InterPro" id="IPR035022">
    <property type="entry name" value="PI3kinase_P85_nSH2"/>
</dbReference>
<dbReference type="InterPro" id="IPR008936">
    <property type="entry name" value="Rho_GTPase_activation_prot"/>
</dbReference>
<dbReference type="InterPro" id="IPR000198">
    <property type="entry name" value="RhoGAP_dom"/>
</dbReference>
<dbReference type="InterPro" id="IPR000980">
    <property type="entry name" value="SH2"/>
</dbReference>
<dbReference type="InterPro" id="IPR036860">
    <property type="entry name" value="SH2_dom_sf"/>
</dbReference>
<dbReference type="InterPro" id="IPR036028">
    <property type="entry name" value="SH3-like_dom_sf"/>
</dbReference>
<dbReference type="InterPro" id="IPR001452">
    <property type="entry name" value="SH3_domain"/>
</dbReference>
<dbReference type="PANTHER" id="PTHR10155">
    <property type="entry name" value="PHOSPHATIDYLINOSITOL 3-KINASE REGULATORY SUBUNIT"/>
    <property type="match status" value="1"/>
</dbReference>
<dbReference type="PANTHER" id="PTHR10155:SF1">
    <property type="entry name" value="PHOSPHATIDYLINOSITOL 3-KINASE REGULATORY SUBUNIT BETA"/>
    <property type="match status" value="1"/>
</dbReference>
<dbReference type="Pfam" id="PF16454">
    <property type="entry name" value="PI3K_P85_iSH2"/>
    <property type="match status" value="1"/>
</dbReference>
<dbReference type="Pfam" id="PF00620">
    <property type="entry name" value="RhoGAP"/>
    <property type="match status" value="1"/>
</dbReference>
<dbReference type="Pfam" id="PF00017">
    <property type="entry name" value="SH2"/>
    <property type="match status" value="2"/>
</dbReference>
<dbReference type="PRINTS" id="PR00678">
    <property type="entry name" value="PI3KINASEP85"/>
</dbReference>
<dbReference type="PRINTS" id="PR00401">
    <property type="entry name" value="SH2DOMAIN"/>
</dbReference>
<dbReference type="SMART" id="SM00324">
    <property type="entry name" value="RhoGAP"/>
    <property type="match status" value="1"/>
</dbReference>
<dbReference type="SMART" id="SM00252">
    <property type="entry name" value="SH2"/>
    <property type="match status" value="2"/>
</dbReference>
<dbReference type="SMART" id="SM00326">
    <property type="entry name" value="SH3"/>
    <property type="match status" value="1"/>
</dbReference>
<dbReference type="SUPFAM" id="SSF48350">
    <property type="entry name" value="GTPase activation domain, GAP"/>
    <property type="match status" value="1"/>
</dbReference>
<dbReference type="SUPFAM" id="SSF55550">
    <property type="entry name" value="SH2 domain"/>
    <property type="match status" value="2"/>
</dbReference>
<dbReference type="SUPFAM" id="SSF50044">
    <property type="entry name" value="SH3-domain"/>
    <property type="match status" value="1"/>
</dbReference>
<dbReference type="PROSITE" id="PS50238">
    <property type="entry name" value="RHOGAP"/>
    <property type="match status" value="1"/>
</dbReference>
<dbReference type="PROSITE" id="PS50001">
    <property type="entry name" value="SH2"/>
    <property type="match status" value="2"/>
</dbReference>
<dbReference type="PROSITE" id="PS50002">
    <property type="entry name" value="SH3"/>
    <property type="match status" value="1"/>
</dbReference>
<feature type="chain" id="PRO_0000080763" description="Phosphatidylinositol 3-kinase regulatory subunit beta">
    <location>
        <begin position="1"/>
        <end position="728"/>
    </location>
</feature>
<feature type="domain" description="SH3" evidence="4">
    <location>
        <begin position="4"/>
        <end position="80"/>
    </location>
</feature>
<feature type="domain" description="Rho-GAP" evidence="2">
    <location>
        <begin position="109"/>
        <end position="295"/>
    </location>
</feature>
<feature type="domain" description="SH2 1" evidence="3">
    <location>
        <begin position="330"/>
        <end position="425"/>
    </location>
</feature>
<feature type="domain" description="SH2 2" evidence="3">
    <location>
        <begin position="622"/>
        <end position="716"/>
    </location>
</feature>
<feature type="region of interest" description="Disordered" evidence="5">
    <location>
        <begin position="81"/>
        <end position="117"/>
    </location>
</feature>
<feature type="region of interest" description="Disordered" evidence="5">
    <location>
        <begin position="254"/>
        <end position="279"/>
    </location>
</feature>
<feature type="region of interest" description="Disordered" evidence="5">
    <location>
        <begin position="295"/>
        <end position="320"/>
    </location>
</feature>
<feature type="compositionally biased region" description="Pro residues" evidence="5">
    <location>
        <begin position="87"/>
        <end position="98"/>
    </location>
</feature>
<feature type="compositionally biased region" description="Pro residues" evidence="5">
    <location>
        <begin position="257"/>
        <end position="268"/>
    </location>
</feature>
<feature type="site" description="Arginine finger; crucial for GTP hydrolysis by stabilizing the transition state" evidence="2">
    <location>
        <position position="147"/>
    </location>
</feature>
<feature type="modified residue" description="Phosphotyrosine" evidence="22 23">
    <location>
        <position position="464"/>
    </location>
</feature>
<feature type="modified residue" description="Phosphotyrosine" evidence="21">
    <location>
        <position position="605"/>
    </location>
</feature>
<feature type="modified residue" description="Phosphotyrosine" evidence="11">
    <location>
        <position position="655"/>
    </location>
</feature>
<feature type="sequence variant" id="VAR_030679" description="In dbSNP:rs2241088." evidence="6 8 17">
    <original>S</original>
    <variation>R</variation>
    <location>
        <position position="234"/>
    </location>
</feature>
<feature type="sequence variant" id="VAR_030680" description="In dbSNP:rs1011320." evidence="6 8 17">
    <original>S</original>
    <variation>P</variation>
    <location>
        <position position="313"/>
    </location>
</feature>
<feature type="sequence variant" id="VAR_069262" description="In MPPH1; dbSNP:rs587776934." evidence="10 13">
    <original>G</original>
    <variation>R</variation>
    <location>
        <position position="373"/>
    </location>
</feature>
<feature type="sequence variant" id="VAR_075556" description="In MPPH1; uncertain significance; dbSNP:rs886041591." evidence="13">
    <original>K</original>
    <variation>E</variation>
    <location>
        <position position="376"/>
    </location>
</feature>
<feature type="sequence variant" id="VAR_075683" description="In MPPH1; dbSNP:rs587777624." evidence="12">
    <original>L</original>
    <variation>P</variation>
    <location>
        <position position="401"/>
    </location>
</feature>
<feature type="sequence variant" id="VAR_075684" description="In MPPH1; dbSNP:rs372272045." evidence="14">
    <original>D</original>
    <variation>H</variation>
    <location>
        <position position="557"/>
    </location>
</feature>
<feature type="mutagenesis site" description="Loss of interaction with FBXL2 and increased half-life; when associated with A-652." evidence="11">
    <original>Q</original>
    <variation>A</variation>
    <location>
        <position position="651"/>
    </location>
</feature>
<feature type="mutagenesis site" description="Loss of interaction with FBXL2 and increased half-life; when associated with A-651." evidence="11">
    <original>R</original>
    <variation>A</variation>
    <location>
        <position position="652"/>
    </location>
</feature>
<feature type="mutagenesis site" description="Stabilized interaction with FBXL2 and decreased half-life." evidence="11">
    <original>Y</original>
    <variation>A</variation>
    <location>
        <position position="655"/>
    </location>
</feature>
<feature type="strand" evidence="25">
    <location>
        <begin position="5"/>
        <end position="11"/>
    </location>
</feature>
<feature type="strand" evidence="25">
    <location>
        <begin position="30"/>
        <end position="34"/>
    </location>
</feature>
<feature type="helix" evidence="25">
    <location>
        <begin position="35"/>
        <end position="40"/>
    </location>
</feature>
<feature type="helix" evidence="25">
    <location>
        <begin position="47"/>
        <end position="49"/>
    </location>
</feature>
<feature type="helix" evidence="25">
    <location>
        <begin position="51"/>
        <end position="54"/>
    </location>
</feature>
<feature type="strand" evidence="25">
    <location>
        <begin position="56"/>
        <end position="61"/>
    </location>
</feature>
<feature type="turn" evidence="25">
    <location>
        <begin position="62"/>
        <end position="64"/>
    </location>
</feature>
<feature type="strand" evidence="25">
    <location>
        <begin position="67"/>
        <end position="71"/>
    </location>
</feature>
<feature type="helix" evidence="25">
    <location>
        <begin position="72"/>
        <end position="74"/>
    </location>
</feature>
<feature type="strand" evidence="25">
    <location>
        <begin position="75"/>
        <end position="81"/>
    </location>
</feature>
<feature type="helix" evidence="24">
    <location>
        <begin position="114"/>
        <end position="117"/>
    </location>
</feature>
<feature type="helix" evidence="24">
    <location>
        <begin position="126"/>
        <end position="138"/>
    </location>
</feature>
<feature type="helix" evidence="24">
    <location>
        <begin position="144"/>
        <end position="146"/>
    </location>
</feature>
<feature type="helix" evidence="24">
    <location>
        <begin position="162"/>
        <end position="164"/>
    </location>
</feature>
<feature type="helix" evidence="24">
    <location>
        <begin position="167"/>
        <end position="180"/>
    </location>
</feature>
<feature type="strand" evidence="24">
    <location>
        <begin position="181"/>
        <end position="183"/>
    </location>
</feature>
<feature type="helix" evidence="24">
    <location>
        <begin position="188"/>
        <end position="199"/>
    </location>
</feature>
<feature type="helix" evidence="24">
    <location>
        <begin position="206"/>
        <end position="209"/>
    </location>
</feature>
<feature type="turn" evidence="24">
    <location>
        <begin position="211"/>
        <end position="213"/>
    </location>
</feature>
<feature type="helix" evidence="24">
    <location>
        <begin position="216"/>
        <end position="235"/>
    </location>
</feature>
<feature type="helix" evidence="24">
    <location>
        <begin position="239"/>
        <end position="255"/>
    </location>
</feature>
<feature type="helix" evidence="24">
    <location>
        <begin position="279"/>
        <end position="293"/>
    </location>
</feature>
<feature type="helix" evidence="28">
    <location>
        <begin position="337"/>
        <end position="344"/>
    </location>
</feature>
<feature type="strand" evidence="28">
    <location>
        <begin position="351"/>
        <end position="356"/>
    </location>
</feature>
<feature type="strand" evidence="28">
    <location>
        <begin position="365"/>
        <end position="371"/>
    </location>
</feature>
<feature type="strand" evidence="28">
    <location>
        <begin position="374"/>
        <end position="383"/>
    </location>
</feature>
<feature type="strand" evidence="28">
    <location>
        <begin position="386"/>
        <end position="392"/>
    </location>
</feature>
<feature type="strand" evidence="28">
    <location>
        <begin position="395"/>
        <end position="397"/>
    </location>
</feature>
<feature type="helix" evidence="28">
    <location>
        <begin position="398"/>
        <end position="405"/>
    </location>
</feature>
<feature type="helix" evidence="28">
    <location>
        <begin position="410"/>
        <end position="412"/>
    </location>
</feature>
<feature type="helix" evidence="26">
    <location>
        <begin position="435"/>
        <end position="492"/>
    </location>
</feature>
<feature type="turn" evidence="27">
    <location>
        <begin position="496"/>
        <end position="498"/>
    </location>
</feature>
<feature type="helix" evidence="26">
    <location>
        <begin position="523"/>
        <end position="531"/>
    </location>
</feature>
<feature type="helix" evidence="26">
    <location>
        <begin position="535"/>
        <end position="561"/>
    </location>
</feature>
<feature type="helix" evidence="26">
    <location>
        <begin position="564"/>
        <end position="583"/>
    </location>
</feature>
<feature type="helix" evidence="26">
    <location>
        <begin position="588"/>
        <end position="594"/>
    </location>
</feature>
<gene>
    <name type="primary">PIK3R2</name>
</gene>
<name>P85B_HUMAN</name>
<comment type="function">
    <text evidence="1 11">Regulatory subunit of phosphoinositide-3-kinase (PI3K), a kinase that phosphorylates PtdIns(4,5)P2 (Phosphatidylinositol 4,5-bisphosphate) to generate phosphatidylinositol 3,4,5-trisphosphate (PIP3). PIP3 plays a key role by recruiting PH domain-containing proteins to the membrane, including AKT1 and PDPK1, activating signaling cascades involved in cell growth, survival, proliferation, motility and morphology. Binds to activated (phosphorylated) protein-tyrosine kinases, through its SH2 domain, and acts as an adapter, mediating the association of the p110 catalytic unit to the plasma membrane. Indirectly regulates autophagy (PubMed:23604317). Promotes nuclear translocation of XBP1 isoform 2 in a ER stress- and/or insulin-dependent manner during metabolic overloading in the liver and hence plays a role in glucose tolerance improvement (By similarity).</text>
</comment>
<comment type="subunit">
    <text evidence="1 7 11 15 16 18">Heterodimer of a regulatory subunit PIK3R2 and a p110 catalytic subunit (PIK3CA, PIK3CB or PIK3CD) (PubMed:23604317). Interacts with AXL (PubMed:9178760). Interacts with FLT1 (tyrosine-phosphorylated) and FLT4 (tyrosine-phosphorylated) (PubMed:15102829, PubMed:9600074). Interacts with NYAP1, NYAP2 and MYO16 (By similarity). Interacts with FBXL2; PIK3R2 is a substrate of the SCF(FBXL2) complex (PubMed:23604317). Interacts with PTPN13; dephosphorylates PIK3R2 (PubMed:23604317). Interacts with XBP1 isoform 2; the interaction is direct and induces translocation of XBP1 isoform 2 into the nucleus in a ER stress- and/or insulin-dependent but PI3K-independent manner (By similarity). Interacts with PIK3R1; the interaction is dissociated in an insulin-dependent manner (By similarity). Interacts with SRC (PubMed:28903391).</text>
</comment>
<comment type="interaction">
    <interactant intactId="EBI-346930">
        <id>O00459</id>
    </interactant>
    <interactant intactId="EBI-608057">
        <id>P10275</id>
        <label>AR</label>
    </interactant>
    <organismsDiffer>false</organismsDiffer>
    <experiments>14</experiments>
</comment>
<comment type="interaction">
    <interactant intactId="EBI-346930">
        <id>O00459</id>
    </interactant>
    <interactant intactId="EBI-518228">
        <id>P22681</id>
        <label>CBL</label>
    </interactant>
    <organismsDiffer>false</organismsDiffer>
    <experiments>4</experiments>
</comment>
<comment type="interaction">
    <interactant intactId="EBI-346930">
        <id>O00459</id>
    </interactant>
    <interactant intactId="EBI-10976677">
        <id>G5E9A7</id>
        <label>DMWD</label>
    </interactant>
    <organismsDiffer>false</organismsDiffer>
    <experiments>3</experiments>
</comment>
<comment type="interaction">
    <interactant intactId="EBI-346930">
        <id>O00459</id>
    </interactant>
    <interactant intactId="EBI-740680">
        <id>Q8WWB3</id>
        <label>DYDC1</label>
    </interactant>
    <organismsDiffer>false</organismsDiffer>
    <experiments>3</experiments>
</comment>
<comment type="interaction">
    <interactant intactId="EBI-346930">
        <id>O00459</id>
    </interactant>
    <interactant intactId="EBI-297353">
        <id>P00533</id>
        <label>EGFR</label>
    </interactant>
    <organismsDiffer>false</organismsDiffer>
    <experiments>5</experiments>
</comment>
<comment type="interaction">
    <interactant intactId="EBI-346930">
        <id>O00459</id>
    </interactant>
    <interactant intactId="EBI-641062">
        <id>P04626</id>
        <label>ERBB2</label>
    </interactant>
    <organismsDiffer>false</organismsDiffer>
    <experiments>7</experiments>
</comment>
<comment type="interaction">
    <interactant intactId="EBI-346930">
        <id>O00459</id>
    </interactant>
    <interactant intactId="EBI-720706">
        <id>P21860</id>
        <label>ERBB3</label>
    </interactant>
    <organismsDiffer>false</organismsDiffer>
    <experiments>16</experiments>
</comment>
<comment type="interaction">
    <interactant intactId="EBI-346930">
        <id>O00459</id>
    </interactant>
    <interactant intactId="EBI-517684">
        <id>Q13480</id>
        <label>GAB1</label>
    </interactant>
    <organismsDiffer>false</organismsDiffer>
    <experiments>23</experiments>
</comment>
<comment type="interaction">
    <interactant intactId="EBI-346930">
        <id>O00459</id>
    </interactant>
    <interactant intactId="EBI-618309">
        <id>Q08379</id>
        <label>GOLGA2</label>
    </interactant>
    <organismsDiffer>false</organismsDiffer>
    <experiments>3</experiments>
</comment>
<comment type="interaction">
    <interactant intactId="EBI-346930">
        <id>O00459</id>
    </interactant>
    <interactant intactId="EBI-401755">
        <id>P62993</id>
        <label>GRB2</label>
    </interactant>
    <organismsDiffer>false</organismsDiffer>
    <experiments>4</experiments>
</comment>
<comment type="interaction">
    <interactant intactId="EBI-346930">
        <id>O00459</id>
    </interactant>
    <interactant intactId="EBI-466029">
        <id>P42858</id>
        <label>HTT</label>
    </interactant>
    <organismsDiffer>false</organismsDiffer>
    <experiments>6</experiments>
</comment>
<comment type="interaction">
    <interactant intactId="EBI-346930">
        <id>O00459</id>
    </interactant>
    <interactant intactId="EBI-475981">
        <id>P08069</id>
        <label>IGF1R</label>
    </interactant>
    <organismsDiffer>false</organismsDiffer>
    <experiments>3</experiments>
</comment>
<comment type="interaction">
    <interactant intactId="EBI-346930">
        <id>O00459</id>
    </interactant>
    <interactant intactId="EBI-747204">
        <id>Q9UKT9</id>
        <label>IKZF3</label>
    </interactant>
    <organismsDiffer>false</organismsDiffer>
    <experiments>4</experiments>
</comment>
<comment type="interaction">
    <interactant intactId="EBI-346930">
        <id>O00459</id>
    </interactant>
    <interactant intactId="EBI-1379503">
        <id>P10721</id>
        <label>KIT</label>
    </interactant>
    <organismsDiffer>false</organismsDiffer>
    <experiments>19</experiments>
</comment>
<comment type="interaction">
    <interactant intactId="EBI-346930">
        <id>O00459</id>
    </interactant>
    <interactant intactId="EBI-739566">
        <id>P19012</id>
        <label>KRT15</label>
    </interactant>
    <organismsDiffer>false</organismsDiffer>
    <experiments>3</experiments>
</comment>
<comment type="interaction">
    <interactant intactId="EBI-346930">
        <id>O00459</id>
    </interactant>
    <interactant intactId="EBI-742094">
        <id>P35900</id>
        <label>KRT20</label>
    </interactant>
    <organismsDiffer>false</organismsDiffer>
    <experiments>3</experiments>
</comment>
<comment type="interaction">
    <interactant intactId="EBI-346930">
        <id>O00459</id>
    </interactant>
    <interactant intactId="EBI-1047263">
        <id>O76015</id>
        <label>KRT38</label>
    </interactant>
    <organismsDiffer>false</organismsDiffer>
    <experiments>5</experiments>
</comment>
<comment type="interaction">
    <interactant intactId="EBI-346930">
        <id>O00459</id>
    </interactant>
    <interactant intactId="EBI-1039152">
        <id>P08581</id>
        <label>MET</label>
    </interactant>
    <organismsDiffer>false</organismsDiffer>
    <experiments>11</experiments>
</comment>
<comment type="interaction">
    <interactant intactId="EBI-346930">
        <id>O00459</id>
    </interactant>
    <interactant intactId="EBI-748896">
        <id>Q96HT8</id>
        <label>MRFAP1L1</label>
    </interactant>
    <organismsDiffer>false</organismsDiffer>
    <experiments>4</experiments>
</comment>
<comment type="interaction">
    <interactant intactId="EBI-346930">
        <id>O00459</id>
    </interactant>
    <interactant intactId="EBI-2116585">
        <id>P42336</id>
        <label>PIK3CA</label>
    </interactant>
    <organismsDiffer>false</organismsDiffer>
    <experiments>49</experiments>
</comment>
<comment type="interaction">
    <interactant intactId="EBI-346930">
        <id>O00459</id>
    </interactant>
    <interactant intactId="EBI-2609540">
        <id>P42338</id>
        <label>PIK3CB</label>
    </interactant>
    <organismsDiffer>false</organismsDiffer>
    <experiments>7</experiments>
</comment>
<comment type="interaction">
    <interactant intactId="EBI-346930">
        <id>O00459</id>
    </interactant>
    <interactant intactId="EBI-79464">
        <id>P27986</id>
        <label>PIK3R1</label>
    </interactant>
    <organismsDiffer>false</organismsDiffer>
    <experiments>4</experiments>
</comment>
<comment type="interaction">
    <interactant intactId="EBI-346930">
        <id>O00459</id>
    </interactant>
    <interactant intactId="EBI-726876">
        <id>Q6NUQ1</id>
        <label>RINT1</label>
    </interactant>
    <organismsDiffer>false</organismsDiffer>
    <experiments>3</experiments>
</comment>
<comment type="interaction">
    <interactant intactId="EBI-346930">
        <id>O00459</id>
    </interactant>
    <interactant intactId="EBI-5235340">
        <id>Q7Z699</id>
        <label>SPRED1</label>
    </interactant>
    <organismsDiffer>false</organismsDiffer>
    <experiments>3</experiments>
</comment>
<comment type="interaction">
    <interactant intactId="EBI-346930">
        <id>O00459</id>
    </interactant>
    <interactant intactId="EBI-740098">
        <id>P36406</id>
        <label>TRIM23</label>
    </interactant>
    <organismsDiffer>false</organismsDiffer>
    <experiments>3</experiments>
</comment>
<comment type="interaction">
    <interactant intactId="EBI-346930">
        <id>O00459</id>
    </interactant>
    <interactant intactId="EBI-2547442">
        <id>P03496</id>
        <label>NS</label>
    </interactant>
    <organismsDiffer>true</organismsDiffer>
    <experiments>13</experiments>
</comment>
<comment type="interaction">
    <interactant intactId="EBI-346930">
        <id>O00459</id>
    </interactant>
    <interactant intactId="EBI-6149498">
        <id>Q82506</id>
        <label>NS</label>
    </interactant>
    <organismsDiffer>true</organismsDiffer>
    <experiments>2</experiments>
</comment>
<comment type="domain">
    <text evidence="11">The SH2 2 domain is required for interaction with FBXL2 and PTPN13.</text>
</comment>
<comment type="PTM">
    <text evidence="9 11">Phosphorylated in response to signaling from activated receptor-type protein kinases (PubMed:19690332, PubMed:20068231). Dephosphorylated by PTPRJ (PubMed:18348712). Dephosphorylated at Tyr-655 by PTPN13. Phosphorylation of Tyr-655 impairs while its dephosphorylation promotes interaction with FBXL2 and SCF(FBXL2)-mediated polyubiquitination (PubMed:23604317).</text>
</comment>
<comment type="PTM">
    <text evidence="19">Ubiquitinated. Polyubiquitination by the SCF(FBXL2) complex probably promotes proteasomal degradation of PIK3R2.</text>
</comment>
<comment type="disease" evidence="10 12 13 14">
    <disease id="DI-03625">
        <name>Megalencephaly-polymicrogyria-polydactyly-hydrocephalus syndrome 1</name>
        <acronym>MPPH1</acronym>
        <description>A syndrome characterized by megalencephaly, hydrocephalus, and polymicrogyria; polydactyly may also be seen. There is considerable phenotypic similarity between this disorder and the megalencephaly-capillary malformation syndrome.</description>
        <dbReference type="MIM" id="603387"/>
    </disease>
    <text>The disease is caused by variants affecting the gene represented in this entry.</text>
</comment>
<comment type="similarity">
    <text evidence="20">Belongs to the PI3K p85 subunit family.</text>
</comment>
<reference key="1">
    <citation type="journal article" date="1992" name="Oncogene">
        <title>Chromosomal localization of human p85 alpha, a subunit of phosphatidylinositol 3-kinase, and its homologue p85 beta.</title>
        <authorList>
            <person name="Volinia S."/>
            <person name="Patracchini P."/>
            <person name="Otsu M."/>
            <person name="Hiles I."/>
            <person name="Gout I."/>
            <person name="Calzolari E."/>
            <person name="Bernardi F."/>
            <person name="Rooke L."/>
            <person name="Waterfield M.D."/>
        </authorList>
    </citation>
    <scope>NUCLEOTIDE SEQUENCE [GENOMIC DNA]</scope>
    <scope>VARIANTS ARG-234 AND PRO-313</scope>
</reference>
<reference key="2">
    <citation type="journal article" date="1998" name="Oncogene">
        <title>An oncogenic fusion product of the phosphatidylinositol 3-kinase p85beta subunit and HUMORF8, a putative deubiquitinating enzyme.</title>
        <authorList>
            <person name="Janssen J.W.G."/>
            <person name="Schleithhoff L."/>
            <person name="Bartram C.R."/>
            <person name="Schulz A.S."/>
        </authorList>
    </citation>
    <scope>NUCLEOTIDE SEQUENCE [MRNA]</scope>
    <scope>VARIANTS ARG-234 AND PRO-313</scope>
</reference>
<reference key="3">
    <citation type="journal article" date="2004" name="Nature">
        <title>The DNA sequence and biology of human chromosome 19.</title>
        <authorList>
            <person name="Grimwood J."/>
            <person name="Gordon L.A."/>
            <person name="Olsen A.S."/>
            <person name="Terry A."/>
            <person name="Schmutz J."/>
            <person name="Lamerdin J.E."/>
            <person name="Hellsten U."/>
            <person name="Goodstein D."/>
            <person name="Couronne O."/>
            <person name="Tran-Gyamfi M."/>
            <person name="Aerts A."/>
            <person name="Altherr M."/>
            <person name="Ashworth L."/>
            <person name="Bajorek E."/>
            <person name="Black S."/>
            <person name="Branscomb E."/>
            <person name="Caenepeel S."/>
            <person name="Carrano A.V."/>
            <person name="Caoile C."/>
            <person name="Chan Y.M."/>
            <person name="Christensen M."/>
            <person name="Cleland C.A."/>
            <person name="Copeland A."/>
            <person name="Dalin E."/>
            <person name="Dehal P."/>
            <person name="Denys M."/>
            <person name="Detter J.C."/>
            <person name="Escobar J."/>
            <person name="Flowers D."/>
            <person name="Fotopulos D."/>
            <person name="Garcia C."/>
            <person name="Georgescu A.M."/>
            <person name="Glavina T."/>
            <person name="Gomez M."/>
            <person name="Gonzales E."/>
            <person name="Groza M."/>
            <person name="Hammon N."/>
            <person name="Hawkins T."/>
            <person name="Haydu L."/>
            <person name="Ho I."/>
            <person name="Huang W."/>
            <person name="Israni S."/>
            <person name="Jett J."/>
            <person name="Kadner K."/>
            <person name="Kimball H."/>
            <person name="Kobayashi A."/>
            <person name="Larionov V."/>
            <person name="Leem S.-H."/>
            <person name="Lopez F."/>
            <person name="Lou Y."/>
            <person name="Lowry S."/>
            <person name="Malfatti S."/>
            <person name="Martinez D."/>
            <person name="McCready P.M."/>
            <person name="Medina C."/>
            <person name="Morgan J."/>
            <person name="Nelson K."/>
            <person name="Nolan M."/>
            <person name="Ovcharenko I."/>
            <person name="Pitluck S."/>
            <person name="Pollard M."/>
            <person name="Popkie A.P."/>
            <person name="Predki P."/>
            <person name="Quan G."/>
            <person name="Ramirez L."/>
            <person name="Rash S."/>
            <person name="Retterer J."/>
            <person name="Rodriguez A."/>
            <person name="Rogers S."/>
            <person name="Salamov A."/>
            <person name="Salazar A."/>
            <person name="She X."/>
            <person name="Smith D."/>
            <person name="Slezak T."/>
            <person name="Solovyev V."/>
            <person name="Thayer N."/>
            <person name="Tice H."/>
            <person name="Tsai M."/>
            <person name="Ustaszewska A."/>
            <person name="Vo N."/>
            <person name="Wagner M."/>
            <person name="Wheeler J."/>
            <person name="Wu K."/>
            <person name="Xie G."/>
            <person name="Yang J."/>
            <person name="Dubchak I."/>
            <person name="Furey T.S."/>
            <person name="DeJong P."/>
            <person name="Dickson M."/>
            <person name="Gordon D."/>
            <person name="Eichler E.E."/>
            <person name="Pennacchio L.A."/>
            <person name="Richardson P."/>
            <person name="Stubbs L."/>
            <person name="Rokhsar D.S."/>
            <person name="Myers R.M."/>
            <person name="Rubin E.M."/>
            <person name="Lucas S.M."/>
        </authorList>
    </citation>
    <scope>NUCLEOTIDE SEQUENCE [LARGE SCALE GENOMIC DNA]</scope>
</reference>
<reference key="4">
    <citation type="journal article" date="2004" name="Genome Res.">
        <title>The status, quality, and expansion of the NIH full-length cDNA project: the Mammalian Gene Collection (MGC).</title>
        <authorList>
            <consortium name="The MGC Project Team"/>
        </authorList>
    </citation>
    <scope>NUCLEOTIDE SEQUENCE [LARGE SCALE MRNA]</scope>
    <scope>VARIANTS ARG-234 AND PRO-313</scope>
    <source>
        <tissue>Brain</tissue>
        <tissue>Placenta</tissue>
    </source>
</reference>
<reference key="5">
    <citation type="journal article" date="1997" name="Oncogene">
        <title>Intracellular signaling of the Ufo/Axl receptor tyrosine kinase is mediated mainly by a multi-substrate docking-site.</title>
        <authorList>
            <person name="Braunger J."/>
            <person name="Schleithoff L."/>
            <person name="Schulz A.S."/>
            <person name="Kessler H."/>
            <person name="Lammers R."/>
            <person name="Ullrich A."/>
            <person name="Bartram C.R."/>
            <person name="Janssen J.W."/>
        </authorList>
    </citation>
    <scope>INTERACTION WITH AXL</scope>
</reference>
<reference key="6">
    <citation type="journal article" date="1998" name="Biochem. Biophys. Res. Commun.">
        <title>Tyrosine 1213 of Flt-1 is a major binding site of Nck and SHP-2.</title>
        <authorList>
            <person name="Igarashi K."/>
            <person name="Isohara T."/>
            <person name="Kato T."/>
            <person name="Shigeta K."/>
            <person name="Yamano T."/>
            <person name="Uno I."/>
        </authorList>
    </citation>
    <scope>INTERACTION WITH FLT1</scope>
</reference>
<reference key="7">
    <citation type="journal article" date="2004" name="J. Biol. Chem.">
        <title>Activation of vascular endothelial growth factor receptor-3 and its downstream signaling promote cell survival under oxidative stress.</title>
        <authorList>
            <person name="Wang J.F."/>
            <person name="Zhang X."/>
            <person name="Groopman J.E."/>
        </authorList>
    </citation>
    <scope>INTERACTION WITH FLT4</scope>
</reference>
<reference key="8">
    <citation type="journal article" date="2008" name="Biochem. J.">
        <title>The tyrosine phosphatase CD148 interacts with the p85 regulatory subunit of phosphoinositide 3-kinase.</title>
        <authorList>
            <person name="Tsuboi N."/>
            <person name="Utsunomiya T."/>
            <person name="Roberts R.L."/>
            <person name="Ito H."/>
            <person name="Takahashi K."/>
            <person name="Noda M."/>
            <person name="Takahashi T."/>
        </authorList>
    </citation>
    <scope>PHOSPHORYLATION</scope>
    <scope>DEPHOSPHORYLATION BY PTPRJ</scope>
</reference>
<reference key="9">
    <citation type="journal article" date="2008" name="Proc. Natl. Acad. Sci. U.S.A.">
        <title>A quantitative atlas of mitotic phosphorylation.</title>
        <authorList>
            <person name="Dephoure N."/>
            <person name="Zhou C."/>
            <person name="Villen J."/>
            <person name="Beausoleil S.A."/>
            <person name="Bakalarski C.E."/>
            <person name="Elledge S.J."/>
            <person name="Gygi S.P."/>
        </authorList>
    </citation>
    <scope>IDENTIFICATION BY MASS SPECTROMETRY [LARGE SCALE ANALYSIS]</scope>
    <source>
        <tissue>Cervix carcinoma</tissue>
    </source>
</reference>
<reference key="10">
    <citation type="journal article" date="2009" name="Mol. Cell. Proteomics">
        <title>Large-scale proteomics analysis of the human kinome.</title>
        <authorList>
            <person name="Oppermann F.S."/>
            <person name="Gnad F."/>
            <person name="Olsen J.V."/>
            <person name="Hornberger R."/>
            <person name="Greff Z."/>
            <person name="Keri G."/>
            <person name="Mann M."/>
            <person name="Daub H."/>
        </authorList>
    </citation>
    <scope>IDENTIFICATION BY MASS SPECTROMETRY [LARGE SCALE ANALYSIS]</scope>
</reference>
<reference key="11">
    <citation type="journal article" date="2009" name="Sci. Signal.">
        <title>Quantitative phosphoproteomic analysis of T cell receptor signaling reveals system-wide modulation of protein-protein interactions.</title>
        <authorList>
            <person name="Mayya V."/>
            <person name="Lundgren D.H."/>
            <person name="Hwang S.-I."/>
            <person name="Rezaul K."/>
            <person name="Wu L."/>
            <person name="Eng J.K."/>
            <person name="Rodionov V."/>
            <person name="Han D.K."/>
        </authorList>
    </citation>
    <scope>PHOSPHORYLATION [LARGE SCALE ANALYSIS] AT TYR-605</scope>
    <scope>IDENTIFICATION BY MASS SPECTROMETRY [LARGE SCALE ANALYSIS]</scope>
    <source>
        <tissue>Leukemic T-cell</tissue>
    </source>
</reference>
<reference key="12">
    <citation type="journal article" date="2010" name="Sci. Signal.">
        <title>Quantitative phosphoproteomics reveals widespread full phosphorylation site occupancy during mitosis.</title>
        <authorList>
            <person name="Olsen J.V."/>
            <person name="Vermeulen M."/>
            <person name="Santamaria A."/>
            <person name="Kumar C."/>
            <person name="Miller M.L."/>
            <person name="Jensen L.J."/>
            <person name="Gnad F."/>
            <person name="Cox J."/>
            <person name="Jensen T.S."/>
            <person name="Nigg E.A."/>
            <person name="Brunak S."/>
            <person name="Mann M."/>
        </authorList>
    </citation>
    <scope>PHOSPHORYLATION [LARGE SCALE ANALYSIS] AT TYR-464</scope>
    <scope>IDENTIFICATION BY MASS SPECTROMETRY [LARGE SCALE ANALYSIS]</scope>
    <source>
        <tissue>Cervix carcinoma</tissue>
    </source>
</reference>
<reference key="13">
    <citation type="journal article" date="2011" name="BMC Syst. Biol.">
        <title>Initial characterization of the human central proteome.</title>
        <authorList>
            <person name="Burkard T.R."/>
            <person name="Planyavsky M."/>
            <person name="Kaupe I."/>
            <person name="Breitwieser F.P."/>
            <person name="Buerckstuemmer T."/>
            <person name="Bennett K.L."/>
            <person name="Superti-Furga G."/>
            <person name="Colinge J."/>
        </authorList>
    </citation>
    <scope>IDENTIFICATION BY MASS SPECTROMETRY [LARGE SCALE ANALYSIS]</scope>
</reference>
<reference key="14">
    <citation type="journal article" date="2013" name="J. Proteome Res.">
        <title>Toward a comprehensive characterization of a human cancer cell phosphoproteome.</title>
        <authorList>
            <person name="Zhou H."/>
            <person name="Di Palma S."/>
            <person name="Preisinger C."/>
            <person name="Peng M."/>
            <person name="Polat A.N."/>
            <person name="Heck A.J."/>
            <person name="Mohammed S."/>
        </authorList>
    </citation>
    <scope>PHOSPHORYLATION [LARGE SCALE ANALYSIS] AT TYR-464</scope>
    <scope>IDENTIFICATION BY MASS SPECTROMETRY [LARGE SCALE ANALYSIS]</scope>
    <source>
        <tissue>Erythroleukemia</tissue>
    </source>
</reference>
<reference key="15">
    <citation type="journal article" date="2013" name="Nat. Cell Biol.">
        <title>FBXL2- and PTPL1-mediated degradation of p110-free p85beta regulatory subunit controls the PI(3)K signalling cascade.</title>
        <authorList>
            <person name="Kuchay S."/>
            <person name="Duan S."/>
            <person name="Schenkein E."/>
            <person name="Peschiaroli A."/>
            <person name="Saraf A."/>
            <person name="Florens L."/>
            <person name="Washburn M.P."/>
            <person name="Pagano M."/>
        </authorList>
    </citation>
    <scope>FUNCTION</scope>
    <scope>INTERACTION WITH FBXL2 AND PTPN13</scope>
    <scope>PHOSPHORYLATION AT TYR-655</scope>
    <scope>DEPHOSPHORYLATION AT TYR-655 BY PTPN13</scope>
    <scope>UBIQUITINATION</scope>
    <scope>DOMAIN</scope>
    <scope>MUTAGENESIS OF GLN-651; ARG-652 AND TYR-655</scope>
</reference>
<reference key="16">
    <citation type="journal article" date="2014" name="Clin. Genet.">
        <title>AKT3 and PIK3R2 mutations in two patients with megalencephaly-related syndromes: MCAP and MPPH.</title>
        <authorList>
            <person name="Nakamura K."/>
            <person name="Kato M."/>
            <person name="Tohyama J."/>
            <person name="Shiohama T."/>
            <person name="Hayasaka K."/>
            <person name="Nishiyama K."/>
            <person name="Kodera H."/>
            <person name="Nakashima M."/>
            <person name="Tsurusaki Y."/>
            <person name="Miyake N."/>
            <person name="Matsumoto N."/>
            <person name="Saitsu H."/>
        </authorList>
    </citation>
    <scope>INVOLVEMENT IN MPPH1</scope>
    <scope>VARIANT MPPH1 PRO-401</scope>
</reference>
<reference key="17">
    <citation type="journal article" date="2012" name="Nat. Genet.">
        <title>De novo germline and postzygotic mutations in AKT3, PIK3R2 and PIK3CA cause a spectrum of related megalencephaly syndromes.</title>
        <authorList>
            <person name="Riviere J.B."/>
            <person name="Mirzaa G.M."/>
            <person name="O'Roak B.J."/>
            <person name="Beddaoui M."/>
            <person name="Alcantara D."/>
            <person name="Conway R.L."/>
            <person name="St-Onge J."/>
            <person name="Schwartzentruber J.A."/>
            <person name="Gripp K.W."/>
            <person name="Nikkel S.M."/>
            <person name="Worthylake T."/>
            <person name="Sullivan C.T."/>
            <person name="Ward T.R."/>
            <person name="Butler H.E."/>
            <person name="Kramer N.A."/>
            <person name="Albrecht B."/>
            <person name="Armour C.M."/>
            <person name="Armstrong L."/>
            <person name="Caluseriu O."/>
            <person name="Cytrynbaum C."/>
            <person name="Drolet B.A."/>
            <person name="Innes A.M."/>
            <person name="Lauzon J.L."/>
            <person name="Lin A.E."/>
            <person name="Mancini G.M."/>
            <person name="Meschino W.S."/>
            <person name="Reggin J.D."/>
            <person name="Saggar A.K."/>
            <person name="Lerman-Sagie T."/>
            <person name="Uyanik G."/>
            <person name="Weksberg R."/>
            <person name="Zirn B."/>
            <person name="Beaulieu C.L."/>
            <person name="Majewski J."/>
            <person name="Bulman D.E."/>
            <person name="O'Driscoll M."/>
            <person name="Shendure J."/>
            <person name="Graham J.M. Jr."/>
            <person name="Boycott K.M."/>
            <person name="Dobyns W.B."/>
        </authorList>
    </citation>
    <scope>INVOLVEMENT IN MPPH1</scope>
    <scope>VARIANT MPPH1 ARG-373</scope>
</reference>
<reference key="18">
    <citation type="journal article" date="2015" name="Proteomics">
        <title>N-terminome analysis of the human mitochondrial proteome.</title>
        <authorList>
            <person name="Vaca Jacome A.S."/>
            <person name="Rabilloud T."/>
            <person name="Schaeffer-Reiss C."/>
            <person name="Rompais M."/>
            <person name="Ayoub D."/>
            <person name="Lane L."/>
            <person name="Bairoch A."/>
            <person name="Van Dorsselaer A."/>
            <person name="Carapito C."/>
        </authorList>
    </citation>
    <scope>IDENTIFICATION BY MASS SPECTROMETRY [LARGE SCALE ANALYSIS]</scope>
</reference>
<reference key="19">
    <citation type="journal article" date="2017" name="Oncotarget">
        <title>Cancer/testis antigen PIWIL2 suppresses circadian rhythms by regulating the stability and activity of BMAL1 and CLOCK.</title>
        <authorList>
            <person name="Lu Y."/>
            <person name="Zheng X."/>
            <person name="Hu W."/>
            <person name="Bian S."/>
            <person name="Zhang Z."/>
            <person name="Tao D."/>
            <person name="Liu Y."/>
            <person name="Ma Y."/>
        </authorList>
    </citation>
    <scope>INTERACTION WITH SRC</scope>
</reference>
<reference key="20">
    <citation type="journal article" date="2015" name="Lancet Neurol.">
        <title>Characterisation of mutations of the phosphoinositide-3-kinase regulatory subunit, PIK3R2, in perisylvian polymicrogyria: a next-generation sequencing study.</title>
        <authorList>
            <person name="Mirzaa G.M."/>
            <person name="Conti V."/>
            <person name="Timms A.E."/>
            <person name="Smyser C.D."/>
            <person name="Ahmed S."/>
            <person name="Carter M."/>
            <person name="Barnett S."/>
            <person name="Hufnagel R.B."/>
            <person name="Goldstein A."/>
            <person name="Narumi-Kishimoto Y."/>
            <person name="Olds C."/>
            <person name="Collins S."/>
            <person name="Johnston K."/>
            <person name="Deleuze J.F."/>
            <person name="Nitschke P."/>
            <person name="Friend K."/>
            <person name="Harris C."/>
            <person name="Goetsch A."/>
            <person name="Martin B."/>
            <person name="Boyle E.A."/>
            <person name="Parrini E."/>
            <person name="Mei D."/>
            <person name="Tattini L."/>
            <person name="Slavotinek A."/>
            <person name="Blair E."/>
            <person name="Barnett C."/>
            <person name="Shendure J."/>
            <person name="Chelly J."/>
            <person name="Dobyns W.B."/>
            <person name="Guerrini R."/>
        </authorList>
    </citation>
    <scope>VARIANTS MPPH1 ARG-373 AND GLU-376</scope>
</reference>
<reference key="21">
    <citation type="journal article" date="2016" name="Eur. J. Hum. Genet.">
        <title>De novo PIK3R2 variant causes polymicrogyria, corpus callosum hyperplasia and focal cortical dysplasia.</title>
        <authorList>
            <person name="Terrone G."/>
            <person name="Voisin N."/>
            <person name="Abdullah Alfaiz A."/>
            <person name="Cappuccio G."/>
            <person name="Vitiello G."/>
            <person name="Guex N."/>
            <person name="D'Amico A."/>
            <person name="James Barkovich A."/>
            <person name="Brunetti-Pierri N."/>
            <person name="Del Giudice E."/>
            <person name="Reymond A."/>
        </authorList>
    </citation>
    <scope>VARIANT MPPH1 HIS-557</scope>
</reference>
<accession>O00459</accession>
<accession>Q5EAT5</accession>
<accession>Q9UPH9</accession>
<proteinExistence type="evidence at protein level"/>
<sequence length="728" mass="81545">MAGPEGFQYRALYPFRRERPEDLELLPGDVLVVSRAALQALGVAEGGERCPQSVGWMPGLNERTRQRGDFPGTYVEFLGPVALARPGPRPRGPRPLPARPRDGAPEPGLTLPDLPEQFSPPDVAPPLLVKLVEAIERTGLDSESHYRPELPAPRTDWSLSDVDQWDTAALADGIKSFLLALPAPLVTPEASAEARRALREAAGPVGPALEPPTLPLHRALTLRFLLQHLGRVASRAPALGPAVRALGATFGPLLLRAPPPPSSPPPGGAPDGSEPSPDFPALLVEKLLQEHLEEQEVAPPALPPKPPKAKPASTVLANGGSPPSLQDAEWYWGDISREEVNEKLRDTPDGTFLVRDASSKIQGEYTLTLRKGGNNKLIKVFHRDGHYGFSEPLTFCSVVDLINHYRHESLAQYNAKLDTRLLYPVSKYQQDQIVKEDSVEAVGAQLKVYHQQYQDKSREYDQLYEEYTRTSQELQMKRTAIEAFNETIKIFEEQGQTQEKCSKEYLERFRREGNEKEMQRILLNSERLKSRIAEIHESRTKLEQQLRAQASDNREIDKRMNSLKPDLMQLRKIRDQYLVWLTQKGARQKKINEWLGIKNETEDQYALMEDEDDLPHHEERTWYVGKINRTQAEEMLSGKRDGTFLIRESSQRGCYACSVVVDGDTKHCVIYRTATGFGFAEPYNLYGSLKELVLHYQHASLVQHNDALTVTLAHPVRAPGPGPPPAAR</sequence>
<protein>
    <recommendedName>
        <fullName>Phosphatidylinositol 3-kinase regulatory subunit beta</fullName>
        <shortName>PI3-kinase regulatory subunit beta</shortName>
        <shortName>PI3K regulatory subunit beta</shortName>
        <shortName>PtdIns-3-kinase regulatory subunit beta</shortName>
    </recommendedName>
    <alternativeName>
        <fullName>Phosphatidylinositol 3-kinase 85 kDa regulatory subunit beta</fullName>
        <shortName>PI3-kinase subunit p85-beta</shortName>
        <shortName>PtdIns-3-kinase regulatory subunit p85-beta</shortName>
    </alternativeName>
</protein>
<organism>
    <name type="scientific">Homo sapiens</name>
    <name type="common">Human</name>
    <dbReference type="NCBI Taxonomy" id="9606"/>
    <lineage>
        <taxon>Eukaryota</taxon>
        <taxon>Metazoa</taxon>
        <taxon>Chordata</taxon>
        <taxon>Craniata</taxon>
        <taxon>Vertebrata</taxon>
        <taxon>Euteleostomi</taxon>
        <taxon>Mammalia</taxon>
        <taxon>Eutheria</taxon>
        <taxon>Euarchontoglires</taxon>
        <taxon>Primates</taxon>
        <taxon>Haplorrhini</taxon>
        <taxon>Catarrhini</taxon>
        <taxon>Hominidae</taxon>
        <taxon>Homo</taxon>
    </lineage>
</organism>